<reference key="1">
    <citation type="journal article" date="2007" name="Science">
        <title>Sea anemone genome reveals ancestral eumetazoan gene repertoire and genomic organization.</title>
        <authorList>
            <person name="Putnam N.H."/>
            <person name="Srivastava M."/>
            <person name="Hellsten U."/>
            <person name="Dirks B."/>
            <person name="Chapman J."/>
            <person name="Salamov A."/>
            <person name="Terry A."/>
            <person name="Shapiro H."/>
            <person name="Lindquist E."/>
            <person name="Kapitonov V.V."/>
            <person name="Jurka J."/>
            <person name="Genikhovich G."/>
            <person name="Grigoriev I.V."/>
            <person name="Lucas S.M."/>
            <person name="Steele R.E."/>
            <person name="Finnerty J.R."/>
            <person name="Technau U."/>
            <person name="Martindale M.Q."/>
            <person name="Rokhsar D.S."/>
        </authorList>
    </citation>
    <scope>NUCLEOTIDE SEQUENCE [LARGE SCALE GENOMIC DNA]</scope>
    <source>
        <strain>CH2 X CH6</strain>
    </source>
</reference>
<keyword id="KW-0131">Cell cycle</keyword>
<keyword id="KW-0132">Cell division</keyword>
<keyword id="KW-0175">Coiled coil</keyword>
<keyword id="KW-0963">Cytoplasm</keyword>
<keyword id="KW-0206">Cytoskeleton</keyword>
<keyword id="KW-0493">Microtubule</keyword>
<keyword id="KW-0498">Mitosis</keyword>
<keyword id="KW-1185">Reference proteome</keyword>
<keyword id="KW-0677">Repeat</keyword>
<keyword id="KW-0813">Transport</keyword>
<keyword id="KW-0853">WD repeat</keyword>
<evidence type="ECO:0000255" key="1">
    <source>
        <dbReference type="HAMAP-Rule" id="MF_03141"/>
    </source>
</evidence>
<evidence type="ECO:0000256" key="2">
    <source>
        <dbReference type="SAM" id="MobiDB-lite"/>
    </source>
</evidence>
<sequence length="409" mass="46036">MVLTPRQKEELNKAIADYLHQCGFEDTLNAFKQDANMPGELDKKYTGLLEKKWTSVIRLQKKVMDLETRLSEAEKEVHHGGGPKKTRSPEDWIPRPPERYTLTGHRSPITKVLFHPVYSVMVTSSEDATVKVWDYETGDFERTLKGHTDAVQDLAFDHTGKFLASSSADMTIKLWDFQGFECIRTLHGHDHNVSSISFLPSGDHLVSASRDKTIKMWEIATGYCVKTFQGHGEWVRRVRPNADGSLIASCSNDQTIRVWVVASRECKCDLRDHDHVIEDLNWAPESATPVINEAAGVEGGKKAMSPGPFLVSASRDKSIKIWDVSAGVCLVTLVGHDNWVRAVMFHPGGKFIVSCSDDKTLRIWDYKNKRCAKTLVAHEHFVTTLDFHKSAPFVATGSVDLTLKVWECR</sequence>
<dbReference type="EMBL" id="DS469571">
    <property type="protein sequence ID" value="EDO41896.1"/>
    <property type="molecule type" value="Genomic_DNA"/>
</dbReference>
<dbReference type="RefSeq" id="XP_001633959.1">
    <property type="nucleotide sequence ID" value="XM_001633909.1"/>
</dbReference>
<dbReference type="SMR" id="A7S338"/>
<dbReference type="FunCoup" id="A7S338">
    <property type="interactions" value="840"/>
</dbReference>
<dbReference type="STRING" id="45351.A7S338"/>
<dbReference type="EnsemblMetazoa" id="EDO41896">
    <property type="protein sequence ID" value="EDO41896"/>
    <property type="gene ID" value="NEMVEDRAFT_v1g242515"/>
</dbReference>
<dbReference type="eggNOG" id="KOG0295">
    <property type="taxonomic scope" value="Eukaryota"/>
</dbReference>
<dbReference type="HOGENOM" id="CLU_000288_57_15_1"/>
<dbReference type="InParanoid" id="A7S338"/>
<dbReference type="OMA" id="WHVATKE"/>
<dbReference type="OrthoDB" id="674604at2759"/>
<dbReference type="PhylomeDB" id="A7S338"/>
<dbReference type="Proteomes" id="UP000001593">
    <property type="component" value="Unassembled WGS sequence"/>
</dbReference>
<dbReference type="GO" id="GO:0005813">
    <property type="term" value="C:centrosome"/>
    <property type="evidence" value="ECO:0007669"/>
    <property type="project" value="UniProtKB-SubCell"/>
</dbReference>
<dbReference type="GO" id="GO:0005881">
    <property type="term" value="C:cytoplasmic microtubule"/>
    <property type="evidence" value="ECO:0000318"/>
    <property type="project" value="GO_Central"/>
</dbReference>
<dbReference type="GO" id="GO:0000776">
    <property type="term" value="C:kinetochore"/>
    <property type="evidence" value="ECO:0000318"/>
    <property type="project" value="GO_Central"/>
</dbReference>
<dbReference type="GO" id="GO:0005875">
    <property type="term" value="C:microtubule associated complex"/>
    <property type="evidence" value="ECO:0000318"/>
    <property type="project" value="GO_Central"/>
</dbReference>
<dbReference type="GO" id="GO:0005635">
    <property type="term" value="C:nuclear envelope"/>
    <property type="evidence" value="ECO:0000318"/>
    <property type="project" value="GO_Central"/>
</dbReference>
<dbReference type="GO" id="GO:1990234">
    <property type="term" value="C:transferase complex"/>
    <property type="evidence" value="ECO:0007669"/>
    <property type="project" value="UniProtKB-ARBA"/>
</dbReference>
<dbReference type="GO" id="GO:0070840">
    <property type="term" value="F:dynein complex binding"/>
    <property type="evidence" value="ECO:0000318"/>
    <property type="project" value="GO_Central"/>
</dbReference>
<dbReference type="GO" id="GO:0051010">
    <property type="term" value="F:microtubule plus-end binding"/>
    <property type="evidence" value="ECO:0000318"/>
    <property type="project" value="GO_Central"/>
</dbReference>
<dbReference type="GO" id="GO:0051301">
    <property type="term" value="P:cell division"/>
    <property type="evidence" value="ECO:0007669"/>
    <property type="project" value="UniProtKB-KW"/>
</dbReference>
<dbReference type="GO" id="GO:0000132">
    <property type="term" value="P:establishment of mitotic spindle orientation"/>
    <property type="evidence" value="ECO:0000318"/>
    <property type="project" value="GO_Central"/>
</dbReference>
<dbReference type="GO" id="GO:0031023">
    <property type="term" value="P:microtubule organizing center organization"/>
    <property type="evidence" value="ECO:0000318"/>
    <property type="project" value="GO_Central"/>
</dbReference>
<dbReference type="GO" id="GO:0051012">
    <property type="term" value="P:microtubule sliding"/>
    <property type="evidence" value="ECO:0007669"/>
    <property type="project" value="UniProtKB-UniRule"/>
</dbReference>
<dbReference type="GO" id="GO:0007097">
    <property type="term" value="P:nuclear migration"/>
    <property type="evidence" value="ECO:0000318"/>
    <property type="project" value="GO_Central"/>
</dbReference>
<dbReference type="GO" id="GO:0047496">
    <property type="term" value="P:vesicle transport along microtubule"/>
    <property type="evidence" value="ECO:0000318"/>
    <property type="project" value="GO_Central"/>
</dbReference>
<dbReference type="CDD" id="cd00200">
    <property type="entry name" value="WD40"/>
    <property type="match status" value="1"/>
</dbReference>
<dbReference type="FunFam" id="2.130.10.10:FF:000038">
    <property type="entry name" value="Lissencephaly-1 homolog B"/>
    <property type="match status" value="1"/>
</dbReference>
<dbReference type="FunFam" id="1.20.960.30:FF:000002">
    <property type="entry name" value="Platelet-activating factor acetylhydrolase ib"/>
    <property type="match status" value="1"/>
</dbReference>
<dbReference type="Gene3D" id="1.20.960.30">
    <property type="match status" value="1"/>
</dbReference>
<dbReference type="Gene3D" id="2.130.10.10">
    <property type="entry name" value="YVTN repeat-like/Quinoprotein amine dehydrogenase"/>
    <property type="match status" value="1"/>
</dbReference>
<dbReference type="HAMAP" id="MF_03141">
    <property type="entry name" value="lis1"/>
    <property type="match status" value="1"/>
</dbReference>
<dbReference type="InterPro" id="IPR017252">
    <property type="entry name" value="Dynein_regulator_LIS1"/>
</dbReference>
<dbReference type="InterPro" id="IPR020472">
    <property type="entry name" value="G-protein_beta_WD-40_rep"/>
</dbReference>
<dbReference type="InterPro" id="IPR037190">
    <property type="entry name" value="LIS1_N"/>
</dbReference>
<dbReference type="InterPro" id="IPR006594">
    <property type="entry name" value="LisH"/>
</dbReference>
<dbReference type="InterPro" id="IPR056795">
    <property type="entry name" value="PAC1-like_LisH-like_dom"/>
</dbReference>
<dbReference type="InterPro" id="IPR015943">
    <property type="entry name" value="WD40/YVTN_repeat-like_dom_sf"/>
</dbReference>
<dbReference type="InterPro" id="IPR019775">
    <property type="entry name" value="WD40_repeat_CS"/>
</dbReference>
<dbReference type="InterPro" id="IPR036322">
    <property type="entry name" value="WD40_repeat_dom_sf"/>
</dbReference>
<dbReference type="InterPro" id="IPR001680">
    <property type="entry name" value="WD40_rpt"/>
</dbReference>
<dbReference type="PANTHER" id="PTHR22847:SF637">
    <property type="entry name" value="WD REPEAT DOMAIN 5B"/>
    <property type="match status" value="1"/>
</dbReference>
<dbReference type="PANTHER" id="PTHR22847">
    <property type="entry name" value="WD40 REPEAT PROTEIN"/>
    <property type="match status" value="1"/>
</dbReference>
<dbReference type="Pfam" id="PF24951">
    <property type="entry name" value="LisH_PAC1"/>
    <property type="match status" value="1"/>
</dbReference>
<dbReference type="Pfam" id="PF00400">
    <property type="entry name" value="WD40"/>
    <property type="match status" value="7"/>
</dbReference>
<dbReference type="PIRSF" id="PIRSF037647">
    <property type="entry name" value="Dynein_regulator_Lis1"/>
    <property type="match status" value="1"/>
</dbReference>
<dbReference type="PRINTS" id="PR00320">
    <property type="entry name" value="GPROTEINBRPT"/>
</dbReference>
<dbReference type="SMART" id="SM00667">
    <property type="entry name" value="LisH"/>
    <property type="match status" value="1"/>
</dbReference>
<dbReference type="SMART" id="SM00320">
    <property type="entry name" value="WD40"/>
    <property type="match status" value="7"/>
</dbReference>
<dbReference type="SUPFAM" id="SSF109925">
    <property type="entry name" value="Lissencephaly-1 protein (Lis-1, PAF-AH alpha) N-terminal domain"/>
    <property type="match status" value="1"/>
</dbReference>
<dbReference type="SUPFAM" id="SSF50978">
    <property type="entry name" value="WD40 repeat-like"/>
    <property type="match status" value="1"/>
</dbReference>
<dbReference type="PROSITE" id="PS50896">
    <property type="entry name" value="LISH"/>
    <property type="match status" value="1"/>
</dbReference>
<dbReference type="PROSITE" id="PS00678">
    <property type="entry name" value="WD_REPEATS_1"/>
    <property type="match status" value="4"/>
</dbReference>
<dbReference type="PROSITE" id="PS50082">
    <property type="entry name" value="WD_REPEATS_2"/>
    <property type="match status" value="7"/>
</dbReference>
<dbReference type="PROSITE" id="PS50294">
    <property type="entry name" value="WD_REPEATS_REGION"/>
    <property type="match status" value="1"/>
</dbReference>
<name>LIS1_NEMVE</name>
<proteinExistence type="inferred from homology"/>
<feature type="chain" id="PRO_0000405053" description="Lissencephaly-1 homolog">
    <location>
        <begin position="1"/>
        <end position="409"/>
    </location>
</feature>
<feature type="domain" description="LisH" evidence="1">
    <location>
        <begin position="7"/>
        <end position="39"/>
    </location>
</feature>
<feature type="repeat" description="WD 1">
    <location>
        <begin position="104"/>
        <end position="145"/>
    </location>
</feature>
<feature type="repeat" description="WD 2">
    <location>
        <begin position="146"/>
        <end position="187"/>
    </location>
</feature>
<feature type="repeat" description="WD 3">
    <location>
        <begin position="188"/>
        <end position="229"/>
    </location>
</feature>
<feature type="repeat" description="WD 4">
    <location>
        <begin position="231"/>
        <end position="269"/>
    </location>
</feature>
<feature type="repeat" description="WD 5">
    <location>
        <begin position="272"/>
        <end position="332"/>
    </location>
</feature>
<feature type="repeat" description="WD 6">
    <location>
        <begin position="335"/>
        <end position="374"/>
    </location>
</feature>
<feature type="repeat" description="WD 7">
    <location>
        <begin position="377"/>
        <end position="409"/>
    </location>
</feature>
<feature type="region of interest" description="Disordered" evidence="2">
    <location>
        <begin position="72"/>
        <end position="95"/>
    </location>
</feature>
<feature type="coiled-coil region" evidence="1">
    <location>
        <begin position="54"/>
        <end position="80"/>
    </location>
</feature>
<comment type="function">
    <text evidence="1">Positively regulates the activity of the minus-end directed microtubule motor protein dynein. May enhance dynein-mediated microtubule sliding by targeting dynein to the microtubule plus end. Required for several dynein- and microtubule-dependent processes.</text>
</comment>
<comment type="subcellular location">
    <subcellularLocation>
        <location evidence="1">Cytoplasm</location>
        <location evidence="1">Cytoskeleton</location>
    </subcellularLocation>
    <subcellularLocation>
        <location evidence="1">Cytoplasm</location>
        <location evidence="1">Cytoskeleton</location>
        <location evidence="1">Microtubule organizing center</location>
        <location evidence="1">Centrosome</location>
    </subcellularLocation>
    <text evidence="1">Localizes to the plus end of microtubules and to the centrosome.</text>
</comment>
<comment type="domain">
    <text evidence="1">Dimerization mediated by the LisH domain may be required to activate dynein.</text>
</comment>
<comment type="similarity">
    <text evidence="1">Belongs to the WD repeat LIS1/nudF family.</text>
</comment>
<accession>A7S338</accession>
<organism>
    <name type="scientific">Nematostella vectensis</name>
    <name type="common">Starlet sea anemone</name>
    <dbReference type="NCBI Taxonomy" id="45351"/>
    <lineage>
        <taxon>Eukaryota</taxon>
        <taxon>Metazoa</taxon>
        <taxon>Cnidaria</taxon>
        <taxon>Anthozoa</taxon>
        <taxon>Hexacorallia</taxon>
        <taxon>Actiniaria</taxon>
        <taxon>Edwardsiidae</taxon>
        <taxon>Nematostella</taxon>
    </lineage>
</organism>
<gene>
    <name type="ORF">v1g242515</name>
</gene>
<protein>
    <recommendedName>
        <fullName evidence="1">Lissencephaly-1 homolog</fullName>
    </recommendedName>
</protein>